<sequence length="266" mass="29992">MRKNTYAMRYVAGQPAERILPPGSFASIGQALPPGEPLSTEERIRILVWNIYKQQRAEWLSVLKNYGKDAHLVLLQEAQTTPELVQFATANYLAADQVPAFVLPQHPSGVMTLSAAHPVYCCPLREREPILRLAKSALVTVYPLPDTRLLMVVNIHAVNFSLGVDVYSKQLLPIGDQIAHHSGPVIMAGDFNAWSRRRMNALYRFAREMSLRQVRFTDDQRRRAFGRPLDFVFYRGLNVSEASVLVTRASDHNPLLVEFSPGKPDK</sequence>
<comment type="subcellular location">
    <subcellularLocation>
        <location evidence="1">Cytoplasm</location>
    </subcellularLocation>
</comment>
<comment type="similarity">
    <text evidence="1">Belongs to the UPF0294 family.</text>
</comment>
<accession>A7ZHU5</accession>
<gene>
    <name evidence="1" type="primary">yafD</name>
    <name type="ordered locus">EcE24377A_0214</name>
</gene>
<evidence type="ECO:0000255" key="1">
    <source>
        <dbReference type="HAMAP-Rule" id="MF_01119"/>
    </source>
</evidence>
<proteinExistence type="inferred from homology"/>
<feature type="chain" id="PRO_1000065251" description="UPF0294 protein YafD">
    <location>
        <begin position="1"/>
        <end position="266"/>
    </location>
</feature>
<name>YAFD_ECO24</name>
<protein>
    <recommendedName>
        <fullName evidence="1">UPF0294 protein YafD</fullName>
    </recommendedName>
</protein>
<keyword id="KW-0963">Cytoplasm</keyword>
<keyword id="KW-1185">Reference proteome</keyword>
<organism>
    <name type="scientific">Escherichia coli O139:H28 (strain E24377A / ETEC)</name>
    <dbReference type="NCBI Taxonomy" id="331111"/>
    <lineage>
        <taxon>Bacteria</taxon>
        <taxon>Pseudomonadati</taxon>
        <taxon>Pseudomonadota</taxon>
        <taxon>Gammaproteobacteria</taxon>
        <taxon>Enterobacterales</taxon>
        <taxon>Enterobacteriaceae</taxon>
        <taxon>Escherichia</taxon>
    </lineage>
</organism>
<reference key="1">
    <citation type="journal article" date="2008" name="J. Bacteriol.">
        <title>The pangenome structure of Escherichia coli: comparative genomic analysis of E. coli commensal and pathogenic isolates.</title>
        <authorList>
            <person name="Rasko D.A."/>
            <person name="Rosovitz M.J."/>
            <person name="Myers G.S.A."/>
            <person name="Mongodin E.F."/>
            <person name="Fricke W.F."/>
            <person name="Gajer P."/>
            <person name="Crabtree J."/>
            <person name="Sebaihia M."/>
            <person name="Thomson N.R."/>
            <person name="Chaudhuri R."/>
            <person name="Henderson I.R."/>
            <person name="Sperandio V."/>
            <person name="Ravel J."/>
        </authorList>
    </citation>
    <scope>NUCLEOTIDE SEQUENCE [LARGE SCALE GENOMIC DNA]</scope>
    <source>
        <strain>E24377A / ETEC</strain>
    </source>
</reference>
<dbReference type="EMBL" id="CP000800">
    <property type="protein sequence ID" value="ABV17578.1"/>
    <property type="molecule type" value="Genomic_DNA"/>
</dbReference>
<dbReference type="RefSeq" id="WP_001230983.1">
    <property type="nucleotide sequence ID" value="NC_009801.1"/>
</dbReference>
<dbReference type="SMR" id="A7ZHU5"/>
<dbReference type="KEGG" id="ecw:EcE24377A_0214"/>
<dbReference type="HOGENOM" id="CLU_083563_0_0_6"/>
<dbReference type="Proteomes" id="UP000001122">
    <property type="component" value="Chromosome"/>
</dbReference>
<dbReference type="GO" id="GO:0005737">
    <property type="term" value="C:cytoplasm"/>
    <property type="evidence" value="ECO:0007669"/>
    <property type="project" value="UniProtKB-SubCell"/>
</dbReference>
<dbReference type="GO" id="GO:0003824">
    <property type="term" value="F:catalytic activity"/>
    <property type="evidence" value="ECO:0007669"/>
    <property type="project" value="InterPro"/>
</dbReference>
<dbReference type="Gene3D" id="3.60.10.10">
    <property type="entry name" value="Endonuclease/exonuclease/phosphatase"/>
    <property type="match status" value="1"/>
</dbReference>
<dbReference type="HAMAP" id="MF_01119">
    <property type="entry name" value="UPF0294"/>
    <property type="match status" value="1"/>
</dbReference>
<dbReference type="InterPro" id="IPR036691">
    <property type="entry name" value="Endo/exonu/phosph_ase_sf"/>
</dbReference>
<dbReference type="InterPro" id="IPR005135">
    <property type="entry name" value="Endo/exonuclease/phosphatase"/>
</dbReference>
<dbReference type="InterPro" id="IPR022958">
    <property type="entry name" value="UPF0294"/>
</dbReference>
<dbReference type="NCBIfam" id="NF003839">
    <property type="entry name" value="PRK05421.1-1"/>
    <property type="match status" value="1"/>
</dbReference>
<dbReference type="NCBIfam" id="NF003840">
    <property type="entry name" value="PRK05421.1-2"/>
    <property type="match status" value="1"/>
</dbReference>
<dbReference type="NCBIfam" id="NF003841">
    <property type="entry name" value="PRK05421.1-3"/>
    <property type="match status" value="1"/>
</dbReference>
<dbReference type="NCBIfam" id="NF003842">
    <property type="entry name" value="PRK05421.1-4"/>
    <property type="match status" value="1"/>
</dbReference>
<dbReference type="Pfam" id="PF03372">
    <property type="entry name" value="Exo_endo_phos"/>
    <property type="match status" value="1"/>
</dbReference>
<dbReference type="SUPFAM" id="SSF56219">
    <property type="entry name" value="DNase I-like"/>
    <property type="match status" value="1"/>
</dbReference>